<name>YQGF_BRUC2</name>
<proteinExistence type="inferred from homology"/>
<keyword id="KW-0963">Cytoplasm</keyword>
<keyword id="KW-0378">Hydrolase</keyword>
<keyword id="KW-0540">Nuclease</keyword>
<keyword id="KW-1185">Reference proteome</keyword>
<keyword id="KW-0690">Ribosome biogenesis</keyword>
<accession>A9MBN7</accession>
<comment type="function">
    <text evidence="1">Could be a nuclease involved in processing of the 5'-end of pre-16S rRNA.</text>
</comment>
<comment type="subcellular location">
    <subcellularLocation>
        <location evidence="1">Cytoplasm</location>
    </subcellularLocation>
</comment>
<comment type="similarity">
    <text evidence="1">Belongs to the YqgF nuclease family.</text>
</comment>
<reference key="1">
    <citation type="submission" date="2007-10" db="EMBL/GenBank/DDBJ databases">
        <title>Brucella canis ATCC 23365 whole genome shotgun sequencing project.</title>
        <authorList>
            <person name="Setubal J.C."/>
            <person name="Bowns C."/>
            <person name="Boyle S."/>
            <person name="Crasta O.R."/>
            <person name="Czar M.J."/>
            <person name="Dharmanolla C."/>
            <person name="Gillespie J.J."/>
            <person name="Kenyon R.W."/>
            <person name="Lu J."/>
            <person name="Mane S."/>
            <person name="Mohapatra S."/>
            <person name="Nagrani S."/>
            <person name="Purkayastha A."/>
            <person name="Rajasimha H.K."/>
            <person name="Shallom J.M."/>
            <person name="Shallom S."/>
            <person name="Shukla M."/>
            <person name="Snyder E.E."/>
            <person name="Sobral B.W."/>
            <person name="Wattam A.R."/>
            <person name="Will R."/>
            <person name="Williams K."/>
            <person name="Yoo H."/>
            <person name="Bruce D."/>
            <person name="Detter C."/>
            <person name="Munk C."/>
            <person name="Brettin T.S."/>
        </authorList>
    </citation>
    <scope>NUCLEOTIDE SEQUENCE [LARGE SCALE GENOMIC DNA]</scope>
    <source>
        <strain>ATCC 23365 / NCTC 10854 / RM-666</strain>
    </source>
</reference>
<feature type="chain" id="PRO_1000082735" description="Putative pre-16S rRNA nuclease">
    <location>
        <begin position="1"/>
        <end position="162"/>
    </location>
</feature>
<dbReference type="EC" id="3.1.-.-" evidence="1"/>
<dbReference type="EMBL" id="CP000873">
    <property type="protein sequence ID" value="ABX63774.1"/>
    <property type="molecule type" value="Genomic_DNA"/>
</dbReference>
<dbReference type="SMR" id="A9MBN7"/>
<dbReference type="KEGG" id="bcs:BCAN_B0598"/>
<dbReference type="HOGENOM" id="CLU_098240_1_1_5"/>
<dbReference type="PhylomeDB" id="A9MBN7"/>
<dbReference type="Proteomes" id="UP000001385">
    <property type="component" value="Chromosome II"/>
</dbReference>
<dbReference type="GO" id="GO:0005829">
    <property type="term" value="C:cytosol"/>
    <property type="evidence" value="ECO:0007669"/>
    <property type="project" value="TreeGrafter"/>
</dbReference>
<dbReference type="GO" id="GO:0004518">
    <property type="term" value="F:nuclease activity"/>
    <property type="evidence" value="ECO:0007669"/>
    <property type="project" value="UniProtKB-KW"/>
</dbReference>
<dbReference type="GO" id="GO:0000967">
    <property type="term" value="P:rRNA 5'-end processing"/>
    <property type="evidence" value="ECO:0007669"/>
    <property type="project" value="UniProtKB-UniRule"/>
</dbReference>
<dbReference type="CDD" id="cd16964">
    <property type="entry name" value="YqgF"/>
    <property type="match status" value="1"/>
</dbReference>
<dbReference type="Gene3D" id="3.30.420.140">
    <property type="entry name" value="YqgF/RNase H-like domain"/>
    <property type="match status" value="1"/>
</dbReference>
<dbReference type="HAMAP" id="MF_00651">
    <property type="entry name" value="Nuclease_YqgF"/>
    <property type="match status" value="1"/>
</dbReference>
<dbReference type="InterPro" id="IPR012337">
    <property type="entry name" value="RNaseH-like_sf"/>
</dbReference>
<dbReference type="InterPro" id="IPR005227">
    <property type="entry name" value="YqgF"/>
</dbReference>
<dbReference type="InterPro" id="IPR006641">
    <property type="entry name" value="YqgF/RNaseH-like_dom"/>
</dbReference>
<dbReference type="InterPro" id="IPR037027">
    <property type="entry name" value="YqgF/RNaseH-like_dom_sf"/>
</dbReference>
<dbReference type="NCBIfam" id="TIGR00250">
    <property type="entry name" value="RNAse_H_YqgF"/>
    <property type="match status" value="1"/>
</dbReference>
<dbReference type="PANTHER" id="PTHR33317">
    <property type="entry name" value="POLYNUCLEOTIDYL TRANSFERASE, RIBONUCLEASE H-LIKE SUPERFAMILY PROTEIN"/>
    <property type="match status" value="1"/>
</dbReference>
<dbReference type="PANTHER" id="PTHR33317:SF4">
    <property type="entry name" value="POLYNUCLEOTIDYL TRANSFERASE, RIBONUCLEASE H-LIKE SUPERFAMILY PROTEIN"/>
    <property type="match status" value="1"/>
</dbReference>
<dbReference type="Pfam" id="PF03652">
    <property type="entry name" value="RuvX"/>
    <property type="match status" value="1"/>
</dbReference>
<dbReference type="SMART" id="SM00732">
    <property type="entry name" value="YqgFc"/>
    <property type="match status" value="1"/>
</dbReference>
<dbReference type="SUPFAM" id="SSF53098">
    <property type="entry name" value="Ribonuclease H-like"/>
    <property type="match status" value="1"/>
</dbReference>
<sequence>MATAEIEEIPALLKPGQTVAGLDLGTKTIGLAVSDLGLSFAHPRPVIKRVKFTIDAQVLLKALETDKVGVIVIGLPMNMDGTAGPRVQATRAFVRTMQPLTDLPFVFWDERLSTVAAERALIGMDVSRGKRADRIDSAAAAFILQGALDRLHMMRRNDYDAG</sequence>
<protein>
    <recommendedName>
        <fullName evidence="1">Putative pre-16S rRNA nuclease</fullName>
        <ecNumber evidence="1">3.1.-.-</ecNumber>
    </recommendedName>
</protein>
<organism>
    <name type="scientific">Brucella canis (strain ATCC 23365 / NCTC 10854 / RM-666)</name>
    <dbReference type="NCBI Taxonomy" id="483179"/>
    <lineage>
        <taxon>Bacteria</taxon>
        <taxon>Pseudomonadati</taxon>
        <taxon>Pseudomonadota</taxon>
        <taxon>Alphaproteobacteria</taxon>
        <taxon>Hyphomicrobiales</taxon>
        <taxon>Brucellaceae</taxon>
        <taxon>Brucella/Ochrobactrum group</taxon>
        <taxon>Brucella</taxon>
    </lineage>
</organism>
<evidence type="ECO:0000255" key="1">
    <source>
        <dbReference type="HAMAP-Rule" id="MF_00651"/>
    </source>
</evidence>
<gene>
    <name type="ordered locus">BCAN_B0598</name>
</gene>